<comment type="function">
    <text evidence="2">Anthrone oxygenase; part of the gene cluster that mediates the biosynthesis of agnestins, dihydroxy-xanthone metabolites (PubMed:30746079). The pathway begins with the assembly and cyclization of atrochrysone thioester by the non-reducing polyketide synthase Agnpks1 (PubMed:30746079). The atrochrysone carboxyl ACP thioesterase AgnL7 then breaks the thioester bond and releases the atrochrysone carboxylic acid as the first enzyme-free intermediate (PubMed:30746079). The decarboxylase AgnL1 then catalyzes the concerted decarboxylation-elimination required to convert atochrysone carboxylic acid into emodin anthrone, which is further oxidized to emodin by the anthrone oxygenase AgnL2 (PubMed:30746079). Emodin then undergoes reduction catalyzed by the oxidoreductase AgnL4 to yield the dihydroquinone tautomer which is the substrate for reduction by the short chain dehydrogenase AgnL6 reduction to produce hydroxyketone, followed by AgnL8 dehydration and likely spontaneous autoxidation to chrysophanol (PubMed:30746079). Baeyer-Villiger oxidation by the oxidase AgnL3 leads to monodictyphenone via cleavage of the C-10/C-10a bond of chrysophanol (PubMed:30746079). Alternative cleavage at the C-4a/C-10 bond of chrysophanol also leads to the formation some cephalone F (PubMed:30746079). Further conversion to agnestins A and B, requires reduction to dihydro-monodictyphenone, oxidation to agnestin C probably via an epoxide, and rearrangement to either agnestin A or agnestin B directly, although agnestin A or agnestin B can also interconvert (PubMed:30746079). Within the cluster, AgnR1 is the only unassigned oxidoreductase present which could be involved in this conversion. However, AgnR1 seems not to be involved in this step, and thus genes involved in the proposed oxidation/reduction may be located elsewhere on the genome (PubMed:30746079). Further agnestin A derivatives are probably formed by spontaneous decarboxylations, dehydrations and methanolysis reactions (PubMed:30746079).</text>
</comment>
<comment type="catalytic activity">
    <reaction evidence="5">
        <text>emodin anthrone + O2 = emodin + H2O + H(+)</text>
        <dbReference type="Rhea" id="RHEA:64268"/>
        <dbReference type="ChEBI" id="CHEBI:15377"/>
        <dbReference type="ChEBI" id="CHEBI:15378"/>
        <dbReference type="ChEBI" id="CHEBI:15379"/>
        <dbReference type="ChEBI" id="CHEBI:77659"/>
        <dbReference type="ChEBI" id="CHEBI:150013"/>
    </reaction>
    <physiologicalReaction direction="left-to-right" evidence="5">
        <dbReference type="Rhea" id="RHEA:64269"/>
    </physiologicalReaction>
</comment>
<comment type="pathway">
    <text evidence="5">Secondary metabolite biosynthesis.</text>
</comment>
<comment type="subcellular location">
    <subcellularLocation>
        <location evidence="1">Membrane</location>
        <topology evidence="1">Multi-pass membrane protein</topology>
    </subcellularLocation>
</comment>
<comment type="similarity">
    <text evidence="4">Belongs to the anthrone oxygenase family.</text>
</comment>
<accession>A0A411PQQ5</accession>
<evidence type="ECO:0000255" key="1"/>
<evidence type="ECO:0000269" key="2">
    <source>
    </source>
</evidence>
<evidence type="ECO:0000303" key="3">
    <source>
    </source>
</evidence>
<evidence type="ECO:0000305" key="4"/>
<evidence type="ECO:0000305" key="5">
    <source>
    </source>
</evidence>
<name>AGN2_PAEDI</name>
<protein>
    <recommendedName>
        <fullName evidence="3">Anthrone oxygenase AgnL2</fullName>
        <ecNumber evidence="5">1.10.3.-</ecNumber>
    </recommendedName>
    <alternativeName>
        <fullName evidence="3">Agnestins biosynthesis cluster protein L2</fullName>
    </alternativeName>
</protein>
<sequence length="164" mass="17992">MSTTSAQATAVVTGSFLSGAMISLSLMAVPVLLDTTTEPTQLFFQWRRMYHYGHQVLPTMAVATTLLYAYTASKRRRAQKPSWAVFALAGTITVSMIPFTWLCMVPTNNVLFGLEAATRLGEPSGMGIEEAQALLVKWSWLHFTRSLMPLMGAILGSLGETVWN</sequence>
<reference key="1">
    <citation type="journal article" date="2019" name="Chem. Sci.">
        <title>Characterisation of the biosynthetic pathway to agnestins A and B reveals the reductive route to chrysophanol in fungi.</title>
        <authorList>
            <person name="Szwalbe A.J."/>
            <person name="Williams K."/>
            <person name="Song Z."/>
            <person name="de Mattos-Shipley K."/>
            <person name="Vincent J.L."/>
            <person name="Bailey A.M."/>
            <person name="Willis C.L."/>
            <person name="Cox R.J."/>
            <person name="Simpson T.J."/>
        </authorList>
    </citation>
    <scope>NUCLEOTIDE SEQUENCE [GENOMIC DNA]</scope>
    <scope>FUNCTION</scope>
    <scope>PATHWAY</scope>
    <source>
        <strain>K5013</strain>
    </source>
</reference>
<dbReference type="EC" id="1.10.3.-" evidence="5"/>
<dbReference type="EMBL" id="MH898872">
    <property type="protein sequence ID" value="QBG38886.1"/>
    <property type="molecule type" value="Genomic_DNA"/>
</dbReference>
<dbReference type="GO" id="GO:0016020">
    <property type="term" value="C:membrane"/>
    <property type="evidence" value="ECO:0007669"/>
    <property type="project" value="UniProtKB-SubCell"/>
</dbReference>
<dbReference type="GO" id="GO:0004497">
    <property type="term" value="F:monooxygenase activity"/>
    <property type="evidence" value="ECO:0007669"/>
    <property type="project" value="UniProtKB-KW"/>
</dbReference>
<dbReference type="InterPro" id="IPR013901">
    <property type="entry name" value="Anthrone_oxy"/>
</dbReference>
<dbReference type="PANTHER" id="PTHR35042">
    <property type="entry name" value="ANTHRONE OXYGENASE ENCC"/>
    <property type="match status" value="1"/>
</dbReference>
<dbReference type="PANTHER" id="PTHR35042:SF3">
    <property type="entry name" value="ANTHRONE OXYGENASE-RELATED"/>
    <property type="match status" value="1"/>
</dbReference>
<dbReference type="Pfam" id="PF08592">
    <property type="entry name" value="Anthrone_oxy"/>
    <property type="match status" value="1"/>
</dbReference>
<feature type="chain" id="PRO_0000449016" description="Anthrone oxygenase AgnL2">
    <location>
        <begin position="1"/>
        <end position="164"/>
    </location>
</feature>
<feature type="transmembrane region" description="Helical" evidence="1">
    <location>
        <begin position="11"/>
        <end position="31"/>
    </location>
</feature>
<feature type="transmembrane region" description="Helical" evidence="1">
    <location>
        <begin position="48"/>
        <end position="70"/>
    </location>
</feature>
<feature type="transmembrane region" description="Helical" evidence="1">
    <location>
        <begin position="85"/>
        <end position="105"/>
    </location>
</feature>
<gene>
    <name evidence="3" type="primary">AgnL2</name>
</gene>
<proteinExistence type="inferred from homology"/>
<keyword id="KW-0472">Membrane</keyword>
<keyword id="KW-0503">Monooxygenase</keyword>
<keyword id="KW-0560">Oxidoreductase</keyword>
<keyword id="KW-0812">Transmembrane</keyword>
<keyword id="KW-1133">Transmembrane helix</keyword>
<organism>
    <name type="scientific">Paecilomyces divaricatus</name>
    <name type="common">Penicillium divaricatum</name>
    <dbReference type="NCBI Taxonomy" id="644132"/>
    <lineage>
        <taxon>Eukaryota</taxon>
        <taxon>Fungi</taxon>
        <taxon>Dikarya</taxon>
        <taxon>Ascomycota</taxon>
        <taxon>Pezizomycotina</taxon>
        <taxon>Eurotiomycetes</taxon>
        <taxon>Eurotiomycetidae</taxon>
        <taxon>Eurotiales</taxon>
        <taxon>Thermoascaceae</taxon>
        <taxon>Paecilomyces</taxon>
    </lineage>
</organism>